<keyword id="KW-0028">Amino-acid biosynthesis</keyword>
<keyword id="KW-0067">ATP-binding</keyword>
<keyword id="KW-0963">Cytoplasm</keyword>
<keyword id="KW-0418">Kinase</keyword>
<keyword id="KW-0547">Nucleotide-binding</keyword>
<keyword id="KW-1185">Reference proteome</keyword>
<keyword id="KW-0791">Threonine biosynthesis</keyword>
<keyword id="KW-0808">Transferase</keyword>
<gene>
    <name evidence="1" type="primary">thrB</name>
    <name type="ordered locus">sync_1869</name>
</gene>
<feature type="chain" id="PRO_1000049186" description="Homoserine kinase">
    <location>
        <begin position="1"/>
        <end position="315"/>
    </location>
</feature>
<feature type="binding site" evidence="1">
    <location>
        <begin position="97"/>
        <end position="107"/>
    </location>
    <ligand>
        <name>ATP</name>
        <dbReference type="ChEBI" id="CHEBI:30616"/>
    </ligand>
</feature>
<comment type="function">
    <text evidence="1">Catalyzes the ATP-dependent phosphorylation of L-homoserine to L-homoserine phosphate.</text>
</comment>
<comment type="catalytic activity">
    <reaction evidence="1">
        <text>L-homoserine + ATP = O-phospho-L-homoserine + ADP + H(+)</text>
        <dbReference type="Rhea" id="RHEA:13985"/>
        <dbReference type="ChEBI" id="CHEBI:15378"/>
        <dbReference type="ChEBI" id="CHEBI:30616"/>
        <dbReference type="ChEBI" id="CHEBI:57476"/>
        <dbReference type="ChEBI" id="CHEBI:57590"/>
        <dbReference type="ChEBI" id="CHEBI:456216"/>
        <dbReference type="EC" id="2.7.1.39"/>
    </reaction>
</comment>
<comment type="pathway">
    <text evidence="1">Amino-acid biosynthesis; L-threonine biosynthesis; L-threonine from L-aspartate: step 4/5.</text>
</comment>
<comment type="subcellular location">
    <subcellularLocation>
        <location evidence="1">Cytoplasm</location>
    </subcellularLocation>
</comment>
<comment type="similarity">
    <text evidence="1">Belongs to the GHMP kinase family. Homoserine kinase subfamily.</text>
</comment>
<name>KHSE_SYNS3</name>
<evidence type="ECO:0000255" key="1">
    <source>
        <dbReference type="HAMAP-Rule" id="MF_00384"/>
    </source>
</evidence>
<accession>Q0I8Z9</accession>
<sequence>MAQPRIGQTVVVDVPATTANIGPGFDCLGAALDLNNRFTMRRIDGDGERFELIIEGQEGSHLRGGPDNLVYRAAQRVWKAAGQEPIAIEARVRLAVPPARGLGSSATAIVAGLVGANALVGEPLSREKLLELAIDIEGHPDNVVPSLLGGLCMTAKAASQRWRVVRCEWMHSIKAVVAIPAIRLSTSEARRAMPKSVPVGDAVVNLGALTLLLQGLRTGNGDLISDGMHDRLHEPYRWRLIKGGQEVKEAALSAGAWGCAISGAGPSILALCSEERGPAVSHAMVKAWEAAGVASRAPLLNLQTAGSHWQPKDAE</sequence>
<proteinExistence type="inferred from homology"/>
<reference key="1">
    <citation type="journal article" date="2006" name="Proc. Natl. Acad. Sci. U.S.A.">
        <title>Genome sequence of Synechococcus CC9311: insights into adaptation to a coastal environment.</title>
        <authorList>
            <person name="Palenik B."/>
            <person name="Ren Q."/>
            <person name="Dupont C.L."/>
            <person name="Myers G.S."/>
            <person name="Heidelberg J.F."/>
            <person name="Badger J.H."/>
            <person name="Madupu R."/>
            <person name="Nelson W.C."/>
            <person name="Brinkac L.M."/>
            <person name="Dodson R.J."/>
            <person name="Durkin A.S."/>
            <person name="Daugherty S.C."/>
            <person name="Sullivan S.A."/>
            <person name="Khouri H."/>
            <person name="Mohamoud Y."/>
            <person name="Halpin R."/>
            <person name="Paulsen I.T."/>
        </authorList>
    </citation>
    <scope>NUCLEOTIDE SEQUENCE [LARGE SCALE GENOMIC DNA]</scope>
    <source>
        <strain>CC9311</strain>
    </source>
</reference>
<dbReference type="EC" id="2.7.1.39" evidence="1"/>
<dbReference type="EMBL" id="CP000435">
    <property type="protein sequence ID" value="ABI46190.1"/>
    <property type="molecule type" value="Genomic_DNA"/>
</dbReference>
<dbReference type="RefSeq" id="WP_011619786.1">
    <property type="nucleotide sequence ID" value="NC_008319.1"/>
</dbReference>
<dbReference type="SMR" id="Q0I8Z9"/>
<dbReference type="STRING" id="64471.sync_1869"/>
<dbReference type="KEGG" id="syg:sync_1869"/>
<dbReference type="eggNOG" id="COG0083">
    <property type="taxonomic scope" value="Bacteria"/>
</dbReference>
<dbReference type="HOGENOM" id="CLU_041243_0_2_3"/>
<dbReference type="OrthoDB" id="9769912at2"/>
<dbReference type="UniPathway" id="UPA00050">
    <property type="reaction ID" value="UER00064"/>
</dbReference>
<dbReference type="Proteomes" id="UP000001961">
    <property type="component" value="Chromosome"/>
</dbReference>
<dbReference type="GO" id="GO:0005737">
    <property type="term" value="C:cytoplasm"/>
    <property type="evidence" value="ECO:0007669"/>
    <property type="project" value="UniProtKB-SubCell"/>
</dbReference>
<dbReference type="GO" id="GO:0005524">
    <property type="term" value="F:ATP binding"/>
    <property type="evidence" value="ECO:0007669"/>
    <property type="project" value="UniProtKB-UniRule"/>
</dbReference>
<dbReference type="GO" id="GO:0004413">
    <property type="term" value="F:homoserine kinase activity"/>
    <property type="evidence" value="ECO:0007669"/>
    <property type="project" value="UniProtKB-UniRule"/>
</dbReference>
<dbReference type="GO" id="GO:0009088">
    <property type="term" value="P:threonine biosynthetic process"/>
    <property type="evidence" value="ECO:0007669"/>
    <property type="project" value="UniProtKB-UniRule"/>
</dbReference>
<dbReference type="Gene3D" id="3.30.230.10">
    <property type="match status" value="1"/>
</dbReference>
<dbReference type="Gene3D" id="3.30.70.890">
    <property type="entry name" value="GHMP kinase, C-terminal domain"/>
    <property type="match status" value="1"/>
</dbReference>
<dbReference type="HAMAP" id="MF_00384">
    <property type="entry name" value="Homoser_kinase"/>
    <property type="match status" value="1"/>
</dbReference>
<dbReference type="InterPro" id="IPR013750">
    <property type="entry name" value="GHMP_kinase_C_dom"/>
</dbReference>
<dbReference type="InterPro" id="IPR036554">
    <property type="entry name" value="GHMP_kinase_C_sf"/>
</dbReference>
<dbReference type="InterPro" id="IPR006204">
    <property type="entry name" value="GHMP_kinase_N_dom"/>
</dbReference>
<dbReference type="InterPro" id="IPR006203">
    <property type="entry name" value="GHMP_knse_ATP-bd_CS"/>
</dbReference>
<dbReference type="InterPro" id="IPR000870">
    <property type="entry name" value="Homoserine_kinase"/>
</dbReference>
<dbReference type="InterPro" id="IPR020568">
    <property type="entry name" value="Ribosomal_Su5_D2-typ_SF"/>
</dbReference>
<dbReference type="InterPro" id="IPR014721">
    <property type="entry name" value="Ribsml_uS5_D2-typ_fold_subgr"/>
</dbReference>
<dbReference type="NCBIfam" id="NF002288">
    <property type="entry name" value="PRK01212.1-4"/>
    <property type="match status" value="1"/>
</dbReference>
<dbReference type="NCBIfam" id="TIGR00191">
    <property type="entry name" value="thrB"/>
    <property type="match status" value="1"/>
</dbReference>
<dbReference type="PANTHER" id="PTHR20861:SF1">
    <property type="entry name" value="HOMOSERINE KINASE"/>
    <property type="match status" value="1"/>
</dbReference>
<dbReference type="PANTHER" id="PTHR20861">
    <property type="entry name" value="HOMOSERINE/4-DIPHOSPHOCYTIDYL-2-C-METHYL-D-ERYTHRITOL KINASE"/>
    <property type="match status" value="1"/>
</dbReference>
<dbReference type="Pfam" id="PF08544">
    <property type="entry name" value="GHMP_kinases_C"/>
    <property type="match status" value="1"/>
</dbReference>
<dbReference type="Pfam" id="PF00288">
    <property type="entry name" value="GHMP_kinases_N"/>
    <property type="match status" value="1"/>
</dbReference>
<dbReference type="PIRSF" id="PIRSF000676">
    <property type="entry name" value="Homoser_kin"/>
    <property type="match status" value="1"/>
</dbReference>
<dbReference type="PRINTS" id="PR00958">
    <property type="entry name" value="HOMSERKINASE"/>
</dbReference>
<dbReference type="SUPFAM" id="SSF55060">
    <property type="entry name" value="GHMP Kinase, C-terminal domain"/>
    <property type="match status" value="1"/>
</dbReference>
<dbReference type="SUPFAM" id="SSF54211">
    <property type="entry name" value="Ribosomal protein S5 domain 2-like"/>
    <property type="match status" value="1"/>
</dbReference>
<dbReference type="PROSITE" id="PS00627">
    <property type="entry name" value="GHMP_KINASES_ATP"/>
    <property type="match status" value="1"/>
</dbReference>
<organism>
    <name type="scientific">Synechococcus sp. (strain CC9311)</name>
    <dbReference type="NCBI Taxonomy" id="64471"/>
    <lineage>
        <taxon>Bacteria</taxon>
        <taxon>Bacillati</taxon>
        <taxon>Cyanobacteriota</taxon>
        <taxon>Cyanophyceae</taxon>
        <taxon>Synechococcales</taxon>
        <taxon>Synechococcaceae</taxon>
        <taxon>Synechococcus</taxon>
    </lineage>
</organism>
<protein>
    <recommendedName>
        <fullName evidence="1">Homoserine kinase</fullName>
        <shortName evidence="1">HK</shortName>
        <shortName evidence="1">HSK</shortName>
        <ecNumber evidence="1">2.7.1.39</ecNumber>
    </recommendedName>
</protein>